<reference key="1">
    <citation type="submission" date="2007-03" db="EMBL/GenBank/DDBJ databases">
        <authorList>
            <person name="Heidelberg J."/>
        </authorList>
    </citation>
    <scope>NUCLEOTIDE SEQUENCE [LARGE SCALE GENOMIC DNA]</scope>
    <source>
        <strain>ATCC 39541 / Classical Ogawa 395 / O395</strain>
    </source>
</reference>
<reference key="2">
    <citation type="journal article" date="2008" name="PLoS ONE">
        <title>A recalibrated molecular clock and independent origins for the cholera pandemic clones.</title>
        <authorList>
            <person name="Feng L."/>
            <person name="Reeves P.R."/>
            <person name="Lan R."/>
            <person name="Ren Y."/>
            <person name="Gao C."/>
            <person name="Zhou Z."/>
            <person name="Ren Y."/>
            <person name="Cheng J."/>
            <person name="Wang W."/>
            <person name="Wang J."/>
            <person name="Qian W."/>
            <person name="Li D."/>
            <person name="Wang L."/>
        </authorList>
    </citation>
    <scope>NUCLEOTIDE SEQUENCE [LARGE SCALE GENOMIC DNA]</scope>
    <source>
        <strain>ATCC 39541 / Classical Ogawa 395 / O395</strain>
    </source>
</reference>
<protein>
    <recommendedName>
        <fullName evidence="1">Fatty acid oxidation complex subunit alpha</fullName>
    </recommendedName>
    <domain>
        <recommendedName>
            <fullName evidence="1">Enoyl-CoA hydratase/3-hydroxybutyryl-CoA epimerase</fullName>
            <ecNumber evidence="1">4.2.1.17</ecNumber>
            <ecNumber evidence="1">5.1.2.3</ecNumber>
        </recommendedName>
    </domain>
    <domain>
        <recommendedName>
            <fullName evidence="1">3-hydroxyacyl-CoA dehydrogenase</fullName>
            <ecNumber evidence="1">1.1.1.35</ecNumber>
        </recommendedName>
    </domain>
</protein>
<keyword id="KW-0963">Cytoplasm</keyword>
<keyword id="KW-0276">Fatty acid metabolism</keyword>
<keyword id="KW-0413">Isomerase</keyword>
<keyword id="KW-0442">Lipid degradation</keyword>
<keyword id="KW-0443">Lipid metabolism</keyword>
<keyword id="KW-0456">Lyase</keyword>
<keyword id="KW-0511">Multifunctional enzyme</keyword>
<keyword id="KW-0520">NAD</keyword>
<keyword id="KW-0560">Oxidoreductase</keyword>
<organism>
    <name type="scientific">Vibrio cholerae serotype O1 (strain ATCC 39541 / Classical Ogawa 395 / O395)</name>
    <dbReference type="NCBI Taxonomy" id="345073"/>
    <lineage>
        <taxon>Bacteria</taxon>
        <taxon>Pseudomonadati</taxon>
        <taxon>Pseudomonadota</taxon>
        <taxon>Gammaproteobacteria</taxon>
        <taxon>Vibrionales</taxon>
        <taxon>Vibrionaceae</taxon>
        <taxon>Vibrio</taxon>
    </lineage>
</organism>
<feature type="chain" id="PRO_1000073632" description="Fatty acid oxidation complex subunit alpha">
    <location>
        <begin position="1"/>
        <end position="708"/>
    </location>
</feature>
<feature type="region of interest" description="Enoyl-CoA hydratase" evidence="1">
    <location>
        <begin position="1"/>
        <end position="191"/>
    </location>
</feature>
<feature type="region of interest" description="3-hydroxyacyl-CoA dehydrogenase" evidence="1">
    <location>
        <begin position="311"/>
        <end position="708"/>
    </location>
</feature>
<feature type="site" description="Important for catalytic activity" evidence="1">
    <location>
        <position position="119"/>
    </location>
</feature>
<feature type="site" description="Important for catalytic activity" evidence="1">
    <location>
        <position position="141"/>
    </location>
</feature>
<accession>A5F2P2</accession>
<accession>C3LZ57</accession>
<proteinExistence type="inferred from homology"/>
<comment type="function">
    <text evidence="1">Catalyzes the formation of a hydroxyacyl-CoA by addition of water on enoyl-CoA. Also exhibits 3-hydroxyacyl-CoA epimerase and 3-hydroxyacyl-CoA dehydrogenase activities.</text>
</comment>
<comment type="catalytic activity">
    <reaction evidence="1">
        <text>a (3S)-3-hydroxyacyl-CoA = a (2E)-enoyl-CoA + H2O</text>
        <dbReference type="Rhea" id="RHEA:16105"/>
        <dbReference type="ChEBI" id="CHEBI:15377"/>
        <dbReference type="ChEBI" id="CHEBI:57318"/>
        <dbReference type="ChEBI" id="CHEBI:58856"/>
        <dbReference type="EC" id="4.2.1.17"/>
    </reaction>
</comment>
<comment type="catalytic activity">
    <reaction evidence="1">
        <text>a 4-saturated-(3S)-3-hydroxyacyl-CoA = a (3E)-enoyl-CoA + H2O</text>
        <dbReference type="Rhea" id="RHEA:20724"/>
        <dbReference type="ChEBI" id="CHEBI:15377"/>
        <dbReference type="ChEBI" id="CHEBI:58521"/>
        <dbReference type="ChEBI" id="CHEBI:137480"/>
        <dbReference type="EC" id="4.2.1.17"/>
    </reaction>
</comment>
<comment type="catalytic activity">
    <reaction evidence="1">
        <text>a (3S)-3-hydroxyacyl-CoA + NAD(+) = a 3-oxoacyl-CoA + NADH + H(+)</text>
        <dbReference type="Rhea" id="RHEA:22432"/>
        <dbReference type="ChEBI" id="CHEBI:15378"/>
        <dbReference type="ChEBI" id="CHEBI:57318"/>
        <dbReference type="ChEBI" id="CHEBI:57540"/>
        <dbReference type="ChEBI" id="CHEBI:57945"/>
        <dbReference type="ChEBI" id="CHEBI:90726"/>
        <dbReference type="EC" id="1.1.1.35"/>
    </reaction>
</comment>
<comment type="catalytic activity">
    <reaction evidence="1">
        <text>(3S)-3-hydroxybutanoyl-CoA = (3R)-3-hydroxybutanoyl-CoA</text>
        <dbReference type="Rhea" id="RHEA:21760"/>
        <dbReference type="ChEBI" id="CHEBI:57315"/>
        <dbReference type="ChEBI" id="CHEBI:57316"/>
        <dbReference type="EC" id="5.1.2.3"/>
    </reaction>
</comment>
<comment type="pathway">
    <text evidence="1">Lipid metabolism; fatty acid beta-oxidation.</text>
</comment>
<comment type="subunit">
    <text evidence="1">Heterotetramer of two alpha chains (FadJ) and two beta chains (FadI).</text>
</comment>
<comment type="subcellular location">
    <subcellularLocation>
        <location evidence="1">Cytoplasm</location>
    </subcellularLocation>
</comment>
<comment type="similarity">
    <text evidence="1">In the N-terminal section; belongs to the enoyl-CoA hydratase/isomerase family.</text>
</comment>
<comment type="similarity">
    <text evidence="1">In the central section; belongs to the 3-hydroxyacyl-CoA dehydrogenase family.</text>
</comment>
<comment type="sequence caution" evidence="2">
    <conflict type="erroneous initiation">
        <sequence resource="EMBL-CDS" id="ACP09073"/>
    </conflict>
</comment>
<evidence type="ECO:0000255" key="1">
    <source>
        <dbReference type="HAMAP-Rule" id="MF_01617"/>
    </source>
</evidence>
<evidence type="ECO:0000305" key="2"/>
<sequence length="708" mass="77299">MDNNNAFQLSFDEQHYAWLAIDVPGEKMNTLQAAFAEEMQAVFATLNEKRGQIKGLIIHSLKPDNFIAGADVRMLEACQSVHEAQALASQGQQMFQQLADLPFPVVAAIHGPCLGGGLELALACDYRVCTEDEVTRLGLPEVMLGLLPGSGGTQRLPRLIGLLPALDLILTGKQLRAKKAKKLGVVDACVPHSVLLDVAKRLLEEKGHKKRAQVTLPIKEKLLANTGLGRKLIFDQAAKKTQQKTRGNYPAAQAILEVIQYGLEKGMHAGLEYEAKRFAELVMTRESKALRSIFFATTEMKKDLGADAKPAPVAAVGVLGGGLMGAGISHVTVAKAKTSVRIKDVANDGVLNALNYNYKLFDKQRQRKILTKAQLQAQMSQLSGGTGFVGFDRCDVVIEAVFEDLKLKQQMVADIEANAKPTTIFATNTSSLPIHQIASQAQRPQNIVGLHYFSPVEKMPLVEVIPHATTSDETIATVVTLARKQGKTPIVVKDCAGFYVNRILAPYMNEAAQVLMAGEPIEKLDAALLDFGFPVGPITLLDEVGVDIGAKIMPILVKELGPRFQGPDVFDVLLKDNRKGRKSGKGFYTYKGSKKKEVDKSVYKLLKLTPESKLNDKEIAMRCLLPMLNEAVRCLDEGIIRSARDGDMGAIFGIGFPPFLGGPFRYMDTLGLTKVVEMMNQHTEKYGERFAPCDGLLTRAGLGEKFYP</sequence>
<gene>
    <name evidence="1" type="primary">fadJ</name>
    <name type="ordered locus">VC0395_A0565</name>
    <name type="ordered locus">VC395_1061</name>
</gene>
<dbReference type="EC" id="4.2.1.17" evidence="1"/>
<dbReference type="EC" id="5.1.2.3" evidence="1"/>
<dbReference type="EC" id="1.1.1.35" evidence="1"/>
<dbReference type="EMBL" id="CP000627">
    <property type="protein sequence ID" value="ABQ20084.1"/>
    <property type="molecule type" value="Genomic_DNA"/>
</dbReference>
<dbReference type="EMBL" id="CP001235">
    <property type="protein sequence ID" value="ACP09073.1"/>
    <property type="status" value="ALT_INIT"/>
    <property type="molecule type" value="Genomic_DNA"/>
</dbReference>
<dbReference type="RefSeq" id="WP_000369797.1">
    <property type="nucleotide sequence ID" value="NZ_JAACZH010000005.1"/>
</dbReference>
<dbReference type="SMR" id="A5F2P2"/>
<dbReference type="KEGG" id="vco:VC0395_A0565"/>
<dbReference type="KEGG" id="vcr:VC395_1061"/>
<dbReference type="PATRIC" id="fig|345073.21.peg.1029"/>
<dbReference type="eggNOG" id="COG1024">
    <property type="taxonomic scope" value="Bacteria"/>
</dbReference>
<dbReference type="eggNOG" id="COG1250">
    <property type="taxonomic scope" value="Bacteria"/>
</dbReference>
<dbReference type="HOGENOM" id="CLU_009834_16_3_6"/>
<dbReference type="OrthoDB" id="5389341at2"/>
<dbReference type="UniPathway" id="UPA00659"/>
<dbReference type="Proteomes" id="UP000000249">
    <property type="component" value="Chromosome 2"/>
</dbReference>
<dbReference type="GO" id="GO:0005737">
    <property type="term" value="C:cytoplasm"/>
    <property type="evidence" value="ECO:0007669"/>
    <property type="project" value="UniProtKB-SubCell"/>
</dbReference>
<dbReference type="GO" id="GO:0008692">
    <property type="term" value="F:3-hydroxybutyryl-CoA epimerase activity"/>
    <property type="evidence" value="ECO:0007669"/>
    <property type="project" value="UniProtKB-UniRule"/>
</dbReference>
<dbReference type="GO" id="GO:0004300">
    <property type="term" value="F:enoyl-CoA hydratase activity"/>
    <property type="evidence" value="ECO:0007669"/>
    <property type="project" value="UniProtKB-UniRule"/>
</dbReference>
<dbReference type="GO" id="GO:0016509">
    <property type="term" value="F:long-chain-3-hydroxyacyl-CoA dehydrogenase activity"/>
    <property type="evidence" value="ECO:0007669"/>
    <property type="project" value="TreeGrafter"/>
</dbReference>
<dbReference type="GO" id="GO:0070403">
    <property type="term" value="F:NAD+ binding"/>
    <property type="evidence" value="ECO:0007669"/>
    <property type="project" value="InterPro"/>
</dbReference>
<dbReference type="GO" id="GO:0006635">
    <property type="term" value="P:fatty acid beta-oxidation"/>
    <property type="evidence" value="ECO:0007669"/>
    <property type="project" value="UniProtKB-UniRule"/>
</dbReference>
<dbReference type="CDD" id="cd06558">
    <property type="entry name" value="crotonase-like"/>
    <property type="match status" value="1"/>
</dbReference>
<dbReference type="FunFam" id="3.90.226.10:FF:000011">
    <property type="entry name" value="Fatty acid oxidation complex subunit alpha"/>
    <property type="match status" value="1"/>
</dbReference>
<dbReference type="FunFam" id="3.40.50.720:FF:000009">
    <property type="entry name" value="Fatty oxidation complex, alpha subunit"/>
    <property type="match status" value="1"/>
</dbReference>
<dbReference type="Gene3D" id="1.10.1040.50">
    <property type="match status" value="1"/>
</dbReference>
<dbReference type="Gene3D" id="3.90.226.10">
    <property type="entry name" value="2-enoyl-CoA Hydratase, Chain A, domain 1"/>
    <property type="match status" value="1"/>
</dbReference>
<dbReference type="Gene3D" id="3.40.50.720">
    <property type="entry name" value="NAD(P)-binding Rossmann-like Domain"/>
    <property type="match status" value="1"/>
</dbReference>
<dbReference type="HAMAP" id="MF_01617">
    <property type="entry name" value="FadJ"/>
    <property type="match status" value="1"/>
</dbReference>
<dbReference type="InterPro" id="IPR006180">
    <property type="entry name" value="3-OHacyl-CoA_DH_CS"/>
</dbReference>
<dbReference type="InterPro" id="IPR006176">
    <property type="entry name" value="3-OHacyl-CoA_DH_NAD-bd"/>
</dbReference>
<dbReference type="InterPro" id="IPR006108">
    <property type="entry name" value="3HC_DH_C"/>
</dbReference>
<dbReference type="InterPro" id="IPR008927">
    <property type="entry name" value="6-PGluconate_DH-like_C_sf"/>
</dbReference>
<dbReference type="InterPro" id="IPR029045">
    <property type="entry name" value="ClpP/crotonase-like_dom_sf"/>
</dbReference>
<dbReference type="InterPro" id="IPR018376">
    <property type="entry name" value="Enoyl-CoA_hyd/isom_CS"/>
</dbReference>
<dbReference type="InterPro" id="IPR001753">
    <property type="entry name" value="Enoyl-CoA_hydra/iso"/>
</dbReference>
<dbReference type="InterPro" id="IPR050136">
    <property type="entry name" value="FA_oxidation_alpha_subunit"/>
</dbReference>
<dbReference type="InterPro" id="IPR012802">
    <property type="entry name" value="FadJ"/>
</dbReference>
<dbReference type="InterPro" id="IPR036291">
    <property type="entry name" value="NAD(P)-bd_dom_sf"/>
</dbReference>
<dbReference type="NCBIfam" id="TIGR02440">
    <property type="entry name" value="FadJ"/>
    <property type="match status" value="1"/>
</dbReference>
<dbReference type="NCBIfam" id="NF008363">
    <property type="entry name" value="PRK11154.1"/>
    <property type="match status" value="1"/>
</dbReference>
<dbReference type="PANTHER" id="PTHR43612">
    <property type="entry name" value="TRIFUNCTIONAL ENZYME SUBUNIT ALPHA"/>
    <property type="match status" value="1"/>
</dbReference>
<dbReference type="PANTHER" id="PTHR43612:SF3">
    <property type="entry name" value="TRIFUNCTIONAL ENZYME SUBUNIT ALPHA, MITOCHONDRIAL"/>
    <property type="match status" value="1"/>
</dbReference>
<dbReference type="Pfam" id="PF00725">
    <property type="entry name" value="3HCDH"/>
    <property type="match status" value="2"/>
</dbReference>
<dbReference type="Pfam" id="PF02737">
    <property type="entry name" value="3HCDH_N"/>
    <property type="match status" value="1"/>
</dbReference>
<dbReference type="Pfam" id="PF00378">
    <property type="entry name" value="ECH_1"/>
    <property type="match status" value="1"/>
</dbReference>
<dbReference type="SUPFAM" id="SSF48179">
    <property type="entry name" value="6-phosphogluconate dehydrogenase C-terminal domain-like"/>
    <property type="match status" value="2"/>
</dbReference>
<dbReference type="SUPFAM" id="SSF52096">
    <property type="entry name" value="ClpP/crotonase"/>
    <property type="match status" value="1"/>
</dbReference>
<dbReference type="SUPFAM" id="SSF51735">
    <property type="entry name" value="NAD(P)-binding Rossmann-fold domains"/>
    <property type="match status" value="1"/>
</dbReference>
<dbReference type="PROSITE" id="PS00067">
    <property type="entry name" value="3HCDH"/>
    <property type="match status" value="1"/>
</dbReference>
<dbReference type="PROSITE" id="PS00166">
    <property type="entry name" value="ENOYL_COA_HYDRATASE"/>
    <property type="match status" value="1"/>
</dbReference>
<name>FADJ_VIBC3</name>